<evidence type="ECO:0000255" key="1">
    <source>
        <dbReference type="HAMAP-Rule" id="MF_00381"/>
    </source>
</evidence>
<evidence type="ECO:0000256" key="2">
    <source>
        <dbReference type="SAM" id="MobiDB-lite"/>
    </source>
</evidence>
<proteinExistence type="inferred from homology"/>
<keyword id="KW-0233">DNA recombination</keyword>
<keyword id="KW-0238">DNA-binding</keyword>
<keyword id="KW-1185">Reference proteome</keyword>
<keyword id="KW-0804">Transcription</keyword>
<keyword id="KW-0805">Transcription regulation</keyword>
<keyword id="KW-0810">Translation regulation</keyword>
<gene>
    <name evidence="1" type="primary">ihfB</name>
    <name evidence="1" type="synonym">himD</name>
    <name type="ordered locus">blr0742</name>
</gene>
<accession>Q89WE8</accession>
<protein>
    <recommendedName>
        <fullName evidence="1">Integration host factor subunit beta</fullName>
        <shortName evidence="1">IHF-beta</shortName>
    </recommendedName>
</protein>
<dbReference type="EMBL" id="BA000040">
    <property type="protein sequence ID" value="BAC46007.1"/>
    <property type="molecule type" value="Genomic_DNA"/>
</dbReference>
<dbReference type="RefSeq" id="NP_767382.1">
    <property type="nucleotide sequence ID" value="NC_004463.1"/>
</dbReference>
<dbReference type="RefSeq" id="WP_008539997.1">
    <property type="nucleotide sequence ID" value="NZ_CP011360.1"/>
</dbReference>
<dbReference type="SMR" id="Q89WE8"/>
<dbReference type="FunCoup" id="Q89WE8">
    <property type="interactions" value="314"/>
</dbReference>
<dbReference type="STRING" id="224911.AAV28_00560"/>
<dbReference type="EnsemblBacteria" id="BAC46007">
    <property type="protein sequence ID" value="BAC46007"/>
    <property type="gene ID" value="BAC46007"/>
</dbReference>
<dbReference type="KEGG" id="bja:blr0742"/>
<dbReference type="PATRIC" id="fig|224911.44.peg.116"/>
<dbReference type="eggNOG" id="COG0776">
    <property type="taxonomic scope" value="Bacteria"/>
</dbReference>
<dbReference type="HOGENOM" id="CLU_105066_2_0_5"/>
<dbReference type="InParanoid" id="Q89WE8"/>
<dbReference type="OrthoDB" id="9804203at2"/>
<dbReference type="PhylomeDB" id="Q89WE8"/>
<dbReference type="PRO" id="PR:Q89WE8"/>
<dbReference type="Proteomes" id="UP000002526">
    <property type="component" value="Chromosome"/>
</dbReference>
<dbReference type="GO" id="GO:0005694">
    <property type="term" value="C:chromosome"/>
    <property type="evidence" value="ECO:0007669"/>
    <property type="project" value="InterPro"/>
</dbReference>
<dbReference type="GO" id="GO:0005829">
    <property type="term" value="C:cytosol"/>
    <property type="evidence" value="ECO:0000318"/>
    <property type="project" value="GO_Central"/>
</dbReference>
<dbReference type="GO" id="GO:0003677">
    <property type="term" value="F:DNA binding"/>
    <property type="evidence" value="ECO:0000318"/>
    <property type="project" value="GO_Central"/>
</dbReference>
<dbReference type="GO" id="GO:0030527">
    <property type="term" value="F:structural constituent of chromatin"/>
    <property type="evidence" value="ECO:0007669"/>
    <property type="project" value="InterPro"/>
</dbReference>
<dbReference type="GO" id="GO:0006310">
    <property type="term" value="P:DNA recombination"/>
    <property type="evidence" value="ECO:0007669"/>
    <property type="project" value="UniProtKB-UniRule"/>
</dbReference>
<dbReference type="GO" id="GO:0006355">
    <property type="term" value="P:regulation of DNA-templated transcription"/>
    <property type="evidence" value="ECO:0007669"/>
    <property type="project" value="UniProtKB-UniRule"/>
</dbReference>
<dbReference type="GO" id="GO:0006417">
    <property type="term" value="P:regulation of translation"/>
    <property type="evidence" value="ECO:0007669"/>
    <property type="project" value="UniProtKB-UniRule"/>
</dbReference>
<dbReference type="CDD" id="cd13836">
    <property type="entry name" value="IHF_B"/>
    <property type="match status" value="1"/>
</dbReference>
<dbReference type="FunFam" id="4.10.520.10:FF:000008">
    <property type="entry name" value="Integration host factor subunit beta"/>
    <property type="match status" value="1"/>
</dbReference>
<dbReference type="Gene3D" id="4.10.520.10">
    <property type="entry name" value="IHF-like DNA-binding proteins"/>
    <property type="match status" value="1"/>
</dbReference>
<dbReference type="HAMAP" id="MF_00381">
    <property type="entry name" value="IHF_beta"/>
    <property type="match status" value="1"/>
</dbReference>
<dbReference type="InterPro" id="IPR000119">
    <property type="entry name" value="Hist_DNA-bd"/>
</dbReference>
<dbReference type="InterPro" id="IPR020816">
    <property type="entry name" value="Histone-like_DNA-bd_CS"/>
</dbReference>
<dbReference type="InterPro" id="IPR010992">
    <property type="entry name" value="IHF-like_DNA-bd_dom_sf"/>
</dbReference>
<dbReference type="InterPro" id="IPR005685">
    <property type="entry name" value="IHF_beta"/>
</dbReference>
<dbReference type="NCBIfam" id="TIGR00988">
    <property type="entry name" value="hip"/>
    <property type="match status" value="1"/>
</dbReference>
<dbReference type="NCBIfam" id="NF001222">
    <property type="entry name" value="PRK00199.1"/>
    <property type="match status" value="1"/>
</dbReference>
<dbReference type="PANTHER" id="PTHR33175">
    <property type="entry name" value="DNA-BINDING PROTEIN HU"/>
    <property type="match status" value="1"/>
</dbReference>
<dbReference type="PANTHER" id="PTHR33175:SF5">
    <property type="entry name" value="INTEGRATION HOST FACTOR SUBUNIT BETA"/>
    <property type="match status" value="1"/>
</dbReference>
<dbReference type="Pfam" id="PF00216">
    <property type="entry name" value="Bac_DNA_binding"/>
    <property type="match status" value="1"/>
</dbReference>
<dbReference type="PRINTS" id="PR01727">
    <property type="entry name" value="DNABINDINGHU"/>
</dbReference>
<dbReference type="SMART" id="SM00411">
    <property type="entry name" value="BHL"/>
    <property type="match status" value="1"/>
</dbReference>
<dbReference type="SUPFAM" id="SSF47729">
    <property type="entry name" value="IHF-like DNA-binding proteins"/>
    <property type="match status" value="1"/>
</dbReference>
<dbReference type="PROSITE" id="PS00045">
    <property type="entry name" value="HISTONE_LIKE"/>
    <property type="match status" value="1"/>
</dbReference>
<feature type="chain" id="PRO_1000060586" description="Integration host factor subunit beta">
    <location>
        <begin position="1"/>
        <end position="101"/>
    </location>
</feature>
<feature type="region of interest" description="Disordered" evidence="2">
    <location>
        <begin position="57"/>
        <end position="101"/>
    </location>
</feature>
<feature type="compositionally biased region" description="Basic and acidic residues" evidence="2">
    <location>
        <begin position="82"/>
        <end position="101"/>
    </location>
</feature>
<reference key="1">
    <citation type="journal article" date="2002" name="DNA Res.">
        <title>Complete genomic sequence of nitrogen-fixing symbiotic bacterium Bradyrhizobium japonicum USDA110.</title>
        <authorList>
            <person name="Kaneko T."/>
            <person name="Nakamura Y."/>
            <person name="Sato S."/>
            <person name="Minamisawa K."/>
            <person name="Uchiumi T."/>
            <person name="Sasamoto S."/>
            <person name="Watanabe A."/>
            <person name="Idesawa K."/>
            <person name="Iriguchi M."/>
            <person name="Kawashima K."/>
            <person name="Kohara M."/>
            <person name="Matsumoto M."/>
            <person name="Shimpo S."/>
            <person name="Tsuruoka H."/>
            <person name="Wada T."/>
            <person name="Yamada M."/>
            <person name="Tabata S."/>
        </authorList>
    </citation>
    <scope>NUCLEOTIDE SEQUENCE [LARGE SCALE GENOMIC DNA]</scope>
    <source>
        <strain>JCM 10833 / BCRC 13528 / IAM 13628 / NBRC 14792 / USDA 110</strain>
    </source>
</reference>
<comment type="function">
    <text evidence="1">This protein is one of the two subunits of integration host factor, a specific DNA-binding protein that functions in genetic recombination as well as in transcriptional and translational control.</text>
</comment>
<comment type="subunit">
    <text evidence="1">Heterodimer of an alpha and a beta chain.</text>
</comment>
<comment type="similarity">
    <text evidence="1">Belongs to the bacterial histone-like protein family.</text>
</comment>
<organism>
    <name type="scientific">Bradyrhizobium diazoefficiens (strain JCM 10833 / BCRC 13528 / IAM 13628 / NBRC 14792 / USDA 110)</name>
    <dbReference type="NCBI Taxonomy" id="224911"/>
    <lineage>
        <taxon>Bacteria</taxon>
        <taxon>Pseudomonadati</taxon>
        <taxon>Pseudomonadota</taxon>
        <taxon>Alphaproteobacteria</taxon>
        <taxon>Hyphomicrobiales</taxon>
        <taxon>Nitrobacteraceae</taxon>
        <taxon>Bradyrhizobium</taxon>
    </lineage>
</organism>
<sequence>MIKSELVQRIAEHNPHLYQRDVENIVNAILEEIVAALARGDRVELRGFGAFSVKHRPARAGRNPRTGAHVPVDQKSVPFFKTGKEMRERLNRDHPDPGAAD</sequence>
<name>IHFB_BRADU</name>